<comment type="function">
    <text evidence="1">Converts the preformed base xanthine, a product of nucleic acid breakdown, to xanthosine 5'-monophosphate (XMP), so it can be reused for RNA or DNA synthesis.</text>
</comment>
<comment type="catalytic activity">
    <reaction evidence="1">
        <text>XMP + diphosphate = xanthine + 5-phospho-alpha-D-ribose 1-diphosphate</text>
        <dbReference type="Rhea" id="RHEA:10800"/>
        <dbReference type="ChEBI" id="CHEBI:17712"/>
        <dbReference type="ChEBI" id="CHEBI:33019"/>
        <dbReference type="ChEBI" id="CHEBI:57464"/>
        <dbReference type="ChEBI" id="CHEBI:58017"/>
        <dbReference type="EC" id="2.4.2.22"/>
    </reaction>
</comment>
<comment type="pathway">
    <text evidence="1">Purine metabolism; XMP biosynthesis via salvage pathway; XMP from xanthine: step 1/1.</text>
</comment>
<comment type="subunit">
    <text evidence="1">Homodimer.</text>
</comment>
<comment type="subcellular location">
    <subcellularLocation>
        <location evidence="1">Cytoplasm</location>
    </subcellularLocation>
</comment>
<comment type="similarity">
    <text evidence="1">Belongs to the purine/pyrimidine phosphoribosyltransferase family. Xpt subfamily.</text>
</comment>
<name>XPT_STRPJ</name>
<dbReference type="EC" id="2.4.2.22" evidence="1"/>
<dbReference type="EMBL" id="FM211187">
    <property type="protein sequence ID" value="CAR69624.1"/>
    <property type="molecule type" value="Genomic_DNA"/>
</dbReference>
<dbReference type="RefSeq" id="WP_000770408.1">
    <property type="nucleotide sequence ID" value="NC_011900.1"/>
</dbReference>
<dbReference type="SMR" id="B8ZN87"/>
<dbReference type="KEGG" id="sne:SPN23F18620"/>
<dbReference type="HOGENOM" id="CLU_099015_0_0_9"/>
<dbReference type="UniPathway" id="UPA00602">
    <property type="reaction ID" value="UER00658"/>
</dbReference>
<dbReference type="GO" id="GO:0005737">
    <property type="term" value="C:cytoplasm"/>
    <property type="evidence" value="ECO:0007669"/>
    <property type="project" value="UniProtKB-SubCell"/>
</dbReference>
<dbReference type="GO" id="GO:0000310">
    <property type="term" value="F:xanthine phosphoribosyltransferase activity"/>
    <property type="evidence" value="ECO:0007669"/>
    <property type="project" value="UniProtKB-UniRule"/>
</dbReference>
<dbReference type="GO" id="GO:0006166">
    <property type="term" value="P:purine ribonucleoside salvage"/>
    <property type="evidence" value="ECO:0007669"/>
    <property type="project" value="UniProtKB-KW"/>
</dbReference>
<dbReference type="GO" id="GO:0046110">
    <property type="term" value="P:xanthine metabolic process"/>
    <property type="evidence" value="ECO:0007669"/>
    <property type="project" value="InterPro"/>
</dbReference>
<dbReference type="GO" id="GO:0032265">
    <property type="term" value="P:XMP salvage"/>
    <property type="evidence" value="ECO:0007669"/>
    <property type="project" value="UniProtKB-UniRule"/>
</dbReference>
<dbReference type="CDD" id="cd06223">
    <property type="entry name" value="PRTases_typeI"/>
    <property type="match status" value="1"/>
</dbReference>
<dbReference type="Gene3D" id="3.40.50.2020">
    <property type="match status" value="1"/>
</dbReference>
<dbReference type="HAMAP" id="MF_01184">
    <property type="entry name" value="XPRTase"/>
    <property type="match status" value="1"/>
</dbReference>
<dbReference type="InterPro" id="IPR000836">
    <property type="entry name" value="PRibTrfase_dom"/>
</dbReference>
<dbReference type="InterPro" id="IPR029057">
    <property type="entry name" value="PRTase-like"/>
</dbReference>
<dbReference type="InterPro" id="IPR050118">
    <property type="entry name" value="Pur/Pyrimidine_PRTase"/>
</dbReference>
<dbReference type="InterPro" id="IPR010079">
    <property type="entry name" value="Xanthine_PRibTrfase"/>
</dbReference>
<dbReference type="NCBIfam" id="NF006671">
    <property type="entry name" value="PRK09219.1"/>
    <property type="match status" value="1"/>
</dbReference>
<dbReference type="NCBIfam" id="TIGR01744">
    <property type="entry name" value="XPRTase"/>
    <property type="match status" value="1"/>
</dbReference>
<dbReference type="PANTHER" id="PTHR43864">
    <property type="entry name" value="HYPOXANTHINE/GUANINE PHOSPHORIBOSYLTRANSFERASE"/>
    <property type="match status" value="1"/>
</dbReference>
<dbReference type="PANTHER" id="PTHR43864:SF1">
    <property type="entry name" value="XANTHINE PHOSPHORIBOSYLTRANSFERASE"/>
    <property type="match status" value="1"/>
</dbReference>
<dbReference type="Pfam" id="PF00156">
    <property type="entry name" value="Pribosyltran"/>
    <property type="match status" value="1"/>
</dbReference>
<dbReference type="SUPFAM" id="SSF53271">
    <property type="entry name" value="PRTase-like"/>
    <property type="match status" value="1"/>
</dbReference>
<protein>
    <recommendedName>
        <fullName evidence="1">Xanthine phosphoribosyltransferase</fullName>
        <shortName evidence="1">XPRTase</shortName>
        <ecNumber evidence="1">2.4.2.22</ecNumber>
    </recommendedName>
</protein>
<proteinExistence type="inferred from homology"/>
<gene>
    <name evidence="1" type="primary">xpt</name>
    <name type="ordered locus">SPN23F18620</name>
</gene>
<sequence length="193" mass="20985">MKLLEERILKDGHILGDNILKVDSFLTHQVDFSLMREIGKVFAEKFAATGITKVVTIEASGIAPAVFTAEALNVPMIFAKKAKNITMNEGILTAQVYSFTKQVTSTVSIAGKFLSPEDKVLIIDDFLANGQAAKGLIQIIEQAGATVQAIGIVIEKSFQDGRDLLEKAGYPVLSLARLDRFENGQVVFKEADL</sequence>
<feature type="chain" id="PRO_1000164456" description="Xanthine phosphoribosyltransferase">
    <location>
        <begin position="1"/>
        <end position="193"/>
    </location>
</feature>
<feature type="binding site" evidence="1">
    <location>
        <position position="20"/>
    </location>
    <ligand>
        <name>xanthine</name>
        <dbReference type="ChEBI" id="CHEBI:17712"/>
    </ligand>
</feature>
<feature type="binding site" evidence="1">
    <location>
        <position position="27"/>
    </location>
    <ligand>
        <name>xanthine</name>
        <dbReference type="ChEBI" id="CHEBI:17712"/>
    </ligand>
</feature>
<feature type="binding site" evidence="1">
    <location>
        <begin position="128"/>
        <end position="132"/>
    </location>
    <ligand>
        <name>5-phospho-alpha-D-ribose 1-diphosphate</name>
        <dbReference type="ChEBI" id="CHEBI:58017"/>
    </ligand>
</feature>
<feature type="binding site" evidence="1">
    <location>
        <position position="156"/>
    </location>
    <ligand>
        <name>xanthine</name>
        <dbReference type="ChEBI" id="CHEBI:17712"/>
    </ligand>
</feature>
<evidence type="ECO:0000255" key="1">
    <source>
        <dbReference type="HAMAP-Rule" id="MF_01184"/>
    </source>
</evidence>
<reference key="1">
    <citation type="journal article" date="2009" name="J. Bacteriol.">
        <title>Role of conjugative elements in the evolution of the multidrug-resistant pandemic clone Streptococcus pneumoniae Spain23F ST81.</title>
        <authorList>
            <person name="Croucher N.J."/>
            <person name="Walker D."/>
            <person name="Romero P."/>
            <person name="Lennard N."/>
            <person name="Paterson G.K."/>
            <person name="Bason N.C."/>
            <person name="Mitchell A.M."/>
            <person name="Quail M.A."/>
            <person name="Andrew P.W."/>
            <person name="Parkhill J."/>
            <person name="Bentley S.D."/>
            <person name="Mitchell T.J."/>
        </authorList>
    </citation>
    <scope>NUCLEOTIDE SEQUENCE [LARGE SCALE GENOMIC DNA]</scope>
    <source>
        <strain>ATCC 700669 / Spain 23F-1</strain>
    </source>
</reference>
<accession>B8ZN87</accession>
<keyword id="KW-0963">Cytoplasm</keyword>
<keyword id="KW-0328">Glycosyltransferase</keyword>
<keyword id="KW-0660">Purine salvage</keyword>
<keyword id="KW-0808">Transferase</keyword>
<organism>
    <name type="scientific">Streptococcus pneumoniae (strain ATCC 700669 / Spain 23F-1)</name>
    <dbReference type="NCBI Taxonomy" id="561276"/>
    <lineage>
        <taxon>Bacteria</taxon>
        <taxon>Bacillati</taxon>
        <taxon>Bacillota</taxon>
        <taxon>Bacilli</taxon>
        <taxon>Lactobacillales</taxon>
        <taxon>Streptococcaceae</taxon>
        <taxon>Streptococcus</taxon>
    </lineage>
</organism>